<proteinExistence type="inferred from homology"/>
<accession>P76553</accession>
<accession>P76969</accession>
<comment type="function">
    <text evidence="2 3">May act on the acetaldehyde produced from the degradation of ethanolamine, producing ethanol (By similarity). Active on acetaldehyde and isobutyraldehyde in vitro. In vitro works equally well with NADH or NADPH (PubMed:22731523).</text>
</comment>
<comment type="catalytic activity">
    <reaction evidence="6">
        <text>ethanol + NAD(+) = acetaldehyde + NADH + H(+)</text>
        <dbReference type="Rhea" id="RHEA:25290"/>
        <dbReference type="ChEBI" id="CHEBI:15343"/>
        <dbReference type="ChEBI" id="CHEBI:15378"/>
        <dbReference type="ChEBI" id="CHEBI:16236"/>
        <dbReference type="ChEBI" id="CHEBI:57540"/>
        <dbReference type="ChEBI" id="CHEBI:57945"/>
        <dbReference type="EC" id="1.1.1.1"/>
    </reaction>
</comment>
<comment type="cofactor">
    <cofactor evidence="1">
        <name>Fe cation</name>
        <dbReference type="ChEBI" id="CHEBI:24875"/>
    </cofactor>
</comment>
<comment type="pathway">
    <text>Amine and polyamine degradation; ethanolamine degradation.</text>
</comment>
<comment type="subcellular location">
    <subcellularLocation>
        <location evidence="1">Bacterial microcompartment</location>
    </subcellularLocation>
</comment>
<comment type="similarity">
    <text evidence="5">Belongs to the iron-containing alcohol dehydrogenase family.</text>
</comment>
<comment type="caution">
    <text evidence="7">In strain MG1655 the eut operon is interrupted by the CPZ-55 prophage, encoding 9 genes situated between eutA and eutB, which are translated in the other direction. CPZ-55 may prevent expression of the eut operon in strain MG1655. Strain W3110 does not have this prophage element and should be able to express the operon.</text>
</comment>
<name>EUTG_ECOLI</name>
<reference key="1">
    <citation type="journal article" date="1997" name="DNA Res.">
        <title>Construction of a contiguous 874-kb sequence of the Escherichia coli-K12 genome corresponding to 50.0-68.8 min on the linkage map and analysis of its sequence features.</title>
        <authorList>
            <person name="Yamamoto Y."/>
            <person name="Aiba H."/>
            <person name="Baba T."/>
            <person name="Hayashi K."/>
            <person name="Inada T."/>
            <person name="Isono K."/>
            <person name="Itoh T."/>
            <person name="Kimura S."/>
            <person name="Kitagawa M."/>
            <person name="Makino K."/>
            <person name="Miki T."/>
            <person name="Mitsuhashi N."/>
            <person name="Mizobuchi K."/>
            <person name="Mori H."/>
            <person name="Nakade S."/>
            <person name="Nakamura Y."/>
            <person name="Nashimoto H."/>
            <person name="Oshima T."/>
            <person name="Oyama S."/>
            <person name="Saito N."/>
            <person name="Sampei G."/>
            <person name="Satoh Y."/>
            <person name="Sivasundaram S."/>
            <person name="Tagami H."/>
            <person name="Takahashi H."/>
            <person name="Takeda J."/>
            <person name="Takemoto K."/>
            <person name="Uehara K."/>
            <person name="Wada C."/>
            <person name="Yamagata S."/>
            <person name="Horiuchi T."/>
        </authorList>
    </citation>
    <scope>NUCLEOTIDE SEQUENCE [LARGE SCALE GENOMIC DNA]</scope>
    <source>
        <strain>K12 / W3110 / ATCC 27325 / DSM 5911</strain>
    </source>
</reference>
<reference key="2">
    <citation type="journal article" date="1997" name="Science">
        <title>The complete genome sequence of Escherichia coli K-12.</title>
        <authorList>
            <person name="Blattner F.R."/>
            <person name="Plunkett G. III"/>
            <person name="Bloch C.A."/>
            <person name="Perna N.T."/>
            <person name="Burland V."/>
            <person name="Riley M."/>
            <person name="Collado-Vides J."/>
            <person name="Glasner J.D."/>
            <person name="Rode C.K."/>
            <person name="Mayhew G.F."/>
            <person name="Gregor J."/>
            <person name="Davis N.W."/>
            <person name="Kirkpatrick H.A."/>
            <person name="Goeden M.A."/>
            <person name="Rose D.J."/>
            <person name="Mau B."/>
            <person name="Shao Y."/>
        </authorList>
    </citation>
    <scope>NUCLEOTIDE SEQUENCE [LARGE SCALE GENOMIC DNA]</scope>
    <source>
        <strain>K12 / MG1655 / ATCC 47076</strain>
    </source>
</reference>
<reference key="3">
    <citation type="journal article" date="2006" name="Mol. Syst. Biol.">
        <title>Highly accurate genome sequences of Escherichia coli K-12 strains MG1655 and W3110.</title>
        <authorList>
            <person name="Hayashi K."/>
            <person name="Morooka N."/>
            <person name="Yamamoto Y."/>
            <person name="Fujita K."/>
            <person name="Isono K."/>
            <person name="Choi S."/>
            <person name="Ohtsubo E."/>
            <person name="Baba T."/>
            <person name="Wanner B.L."/>
            <person name="Mori H."/>
            <person name="Horiuchi T."/>
        </authorList>
    </citation>
    <scope>NUCLEOTIDE SEQUENCE [LARGE SCALE GENOMIC DNA]</scope>
    <source>
        <strain>K12 / W3110 / ATCC 27325 / DSM 5911</strain>
    </source>
</reference>
<reference key="4">
    <citation type="journal article" date="2012" name="Microb. Cell Fact.">
        <title>Isobutyraldehyde production from Escherichia coli by removing aldehyde reductase activity.</title>
        <authorList>
            <person name="Rodriguez G.M."/>
            <person name="Atsumi S."/>
        </authorList>
    </citation>
    <scope>FUNCTION</scope>
    <scope>COFACTOR</scope>
    <source>
        <strain>K12 / BW25113</strain>
    </source>
</reference>
<feature type="chain" id="PRO_0000087843" description="Probable alcohol dehydrogenase EutG">
    <location>
        <begin position="1"/>
        <end position="395"/>
    </location>
</feature>
<feature type="binding site" evidence="1">
    <location>
        <position position="57"/>
    </location>
    <ligand>
        <name>NAD(+)</name>
        <dbReference type="ChEBI" id="CHEBI:57540"/>
    </ligand>
</feature>
<feature type="binding site" evidence="1">
    <location>
        <begin position="116"/>
        <end position="120"/>
    </location>
    <ligand>
        <name>NAD(+)</name>
        <dbReference type="ChEBI" id="CHEBI:57540"/>
    </ligand>
</feature>
<feature type="binding site" evidence="1">
    <location>
        <begin position="156"/>
        <end position="160"/>
    </location>
    <ligand>
        <name>NAD(+)</name>
        <dbReference type="ChEBI" id="CHEBI:57540"/>
    </ligand>
</feature>
<feature type="binding site" evidence="1">
    <location>
        <position position="178"/>
    </location>
    <ligand>
        <name>NAD(+)</name>
        <dbReference type="ChEBI" id="CHEBI:57540"/>
    </ligand>
</feature>
<feature type="binding site" evidence="1">
    <location>
        <begin position="197"/>
        <end position="201"/>
    </location>
    <ligand>
        <name>NAD(+)</name>
        <dbReference type="ChEBI" id="CHEBI:57540"/>
    </ligand>
</feature>
<feature type="binding site" evidence="1">
    <location>
        <position position="212"/>
    </location>
    <ligand>
        <name>Fe cation</name>
        <dbReference type="ChEBI" id="CHEBI:24875"/>
    </ligand>
</feature>
<feature type="binding site" evidence="1">
    <location>
        <position position="216"/>
    </location>
    <ligand>
        <name>Fe cation</name>
        <dbReference type="ChEBI" id="CHEBI:24875"/>
    </ligand>
</feature>
<feature type="binding site" evidence="1">
    <location>
        <position position="281"/>
    </location>
    <ligand>
        <name>Fe cation</name>
        <dbReference type="ChEBI" id="CHEBI:24875"/>
    </ligand>
</feature>
<feature type="binding site" evidence="1">
    <location>
        <position position="295"/>
    </location>
    <ligand>
        <name>Fe cation</name>
        <dbReference type="ChEBI" id="CHEBI:24875"/>
    </ligand>
</feature>
<feature type="binding site" evidence="1">
    <location>
        <position position="295"/>
    </location>
    <ligand>
        <name>NAD(+)</name>
        <dbReference type="ChEBI" id="CHEBI:57540"/>
    </ligand>
</feature>
<feature type="binding site" evidence="1">
    <location>
        <position position="354"/>
    </location>
    <ligand>
        <name>NAD(+)</name>
        <dbReference type="ChEBI" id="CHEBI:57540"/>
    </ligand>
</feature>
<evidence type="ECO:0000250" key="1">
    <source>
        <dbReference type="UniProtKB" id="P0A9S1"/>
    </source>
</evidence>
<evidence type="ECO:0000250" key="2">
    <source>
        <dbReference type="UniProtKB" id="P41795"/>
    </source>
</evidence>
<evidence type="ECO:0000269" key="3">
    <source>
    </source>
</evidence>
<evidence type="ECO:0000303" key="4">
    <source>
    </source>
</evidence>
<evidence type="ECO:0000305" key="5"/>
<evidence type="ECO:0000305" key="6">
    <source>
    </source>
</evidence>
<evidence type="ECO:0000305" key="7">
    <source>
    </source>
</evidence>
<dbReference type="EC" id="1.1.1.1" evidence="6"/>
<dbReference type="EMBL" id="U00096">
    <property type="protein sequence ID" value="AAC75506.2"/>
    <property type="molecule type" value="Genomic_DNA"/>
</dbReference>
<dbReference type="EMBL" id="AP009048">
    <property type="protein sequence ID" value="BAA16331.1"/>
    <property type="molecule type" value="Genomic_DNA"/>
</dbReference>
<dbReference type="PIR" id="D65020">
    <property type="entry name" value="D65020"/>
</dbReference>
<dbReference type="RefSeq" id="NP_416948.4">
    <property type="nucleotide sequence ID" value="NC_000913.3"/>
</dbReference>
<dbReference type="RefSeq" id="WP_001326575.1">
    <property type="nucleotide sequence ID" value="NZ_LN832404.1"/>
</dbReference>
<dbReference type="SMR" id="P76553"/>
<dbReference type="BioGRID" id="4262025">
    <property type="interactions" value="11"/>
</dbReference>
<dbReference type="FunCoup" id="P76553">
    <property type="interactions" value="591"/>
</dbReference>
<dbReference type="IntAct" id="P76553">
    <property type="interactions" value="1"/>
</dbReference>
<dbReference type="STRING" id="511145.b2453"/>
<dbReference type="PaxDb" id="511145-b2453"/>
<dbReference type="EnsemblBacteria" id="AAC75506">
    <property type="protein sequence ID" value="AAC75506"/>
    <property type="gene ID" value="b2453"/>
</dbReference>
<dbReference type="GeneID" id="946233"/>
<dbReference type="KEGG" id="ecj:JW2437"/>
<dbReference type="KEGG" id="eco:b2453"/>
<dbReference type="KEGG" id="ecoc:C3026_13615"/>
<dbReference type="PATRIC" id="fig|1411691.4.peg.4287"/>
<dbReference type="EchoBASE" id="EB3935"/>
<dbReference type="eggNOG" id="COG1454">
    <property type="taxonomic scope" value="Bacteria"/>
</dbReference>
<dbReference type="HOGENOM" id="CLU_007207_0_0_6"/>
<dbReference type="InParanoid" id="P76553"/>
<dbReference type="OMA" id="PRVWAFN"/>
<dbReference type="OrthoDB" id="9815791at2"/>
<dbReference type="PhylomeDB" id="P76553"/>
<dbReference type="BioCyc" id="EcoCyc:G7283-MONOMER"/>
<dbReference type="UniPathway" id="UPA00560"/>
<dbReference type="PRO" id="PR:P76553"/>
<dbReference type="Proteomes" id="UP000000625">
    <property type="component" value="Chromosome"/>
</dbReference>
<dbReference type="GO" id="GO:0031469">
    <property type="term" value="C:bacterial microcompartment"/>
    <property type="evidence" value="ECO:0007669"/>
    <property type="project" value="UniProtKB-SubCell"/>
</dbReference>
<dbReference type="GO" id="GO:0004022">
    <property type="term" value="F:alcohol dehydrogenase (NAD+) activity"/>
    <property type="evidence" value="ECO:0000315"/>
    <property type="project" value="CACAO"/>
</dbReference>
<dbReference type="GO" id="GO:0120542">
    <property type="term" value="F:ethanol dehydrogenase (NAD+) activity"/>
    <property type="evidence" value="ECO:0007669"/>
    <property type="project" value="RHEA"/>
</dbReference>
<dbReference type="GO" id="GO:0046872">
    <property type="term" value="F:metal ion binding"/>
    <property type="evidence" value="ECO:0007669"/>
    <property type="project" value="UniProtKB-KW"/>
</dbReference>
<dbReference type="GO" id="GO:0016616">
    <property type="term" value="F:oxidoreductase activity, acting on the CH-OH group of donors, NAD or NADP as acceptor"/>
    <property type="evidence" value="ECO:0000314"/>
    <property type="project" value="EcoCyc"/>
</dbReference>
<dbReference type="GO" id="GO:0046336">
    <property type="term" value="P:ethanolamine catabolic process"/>
    <property type="evidence" value="ECO:0007669"/>
    <property type="project" value="UniProtKB-UniPathway"/>
</dbReference>
<dbReference type="CDD" id="cd08551">
    <property type="entry name" value="Fe-ADH"/>
    <property type="match status" value="1"/>
</dbReference>
<dbReference type="FunFam" id="1.20.1090.10:FF:000001">
    <property type="entry name" value="Aldehyde-alcohol dehydrogenase"/>
    <property type="match status" value="1"/>
</dbReference>
<dbReference type="FunFam" id="3.40.50.1970:FF:000014">
    <property type="entry name" value="Ethanolamine utilization protein EutG"/>
    <property type="match status" value="1"/>
</dbReference>
<dbReference type="Gene3D" id="3.40.50.1970">
    <property type="match status" value="1"/>
</dbReference>
<dbReference type="Gene3D" id="1.20.1090.10">
    <property type="entry name" value="Dehydroquinate synthase-like - alpha domain"/>
    <property type="match status" value="1"/>
</dbReference>
<dbReference type="InterPro" id="IPR001670">
    <property type="entry name" value="ADH_Fe/GldA"/>
</dbReference>
<dbReference type="InterPro" id="IPR056798">
    <property type="entry name" value="ADH_Fe_C"/>
</dbReference>
<dbReference type="InterPro" id="IPR018211">
    <property type="entry name" value="ADH_Fe_CS"/>
</dbReference>
<dbReference type="InterPro" id="IPR039697">
    <property type="entry name" value="Alcohol_dehydrogenase_Fe"/>
</dbReference>
<dbReference type="NCBIfam" id="NF011998">
    <property type="entry name" value="PRK15454.1"/>
    <property type="match status" value="1"/>
</dbReference>
<dbReference type="PANTHER" id="PTHR11496">
    <property type="entry name" value="ALCOHOL DEHYDROGENASE"/>
    <property type="match status" value="1"/>
</dbReference>
<dbReference type="PANTHER" id="PTHR11496:SF94">
    <property type="entry name" value="ALCOHOL DEHYDROGENASE EUTG-RELATED"/>
    <property type="match status" value="1"/>
</dbReference>
<dbReference type="Pfam" id="PF25137">
    <property type="entry name" value="ADH_Fe_C"/>
    <property type="match status" value="1"/>
</dbReference>
<dbReference type="Pfam" id="PF00465">
    <property type="entry name" value="Fe-ADH"/>
    <property type="match status" value="1"/>
</dbReference>
<dbReference type="SUPFAM" id="SSF56796">
    <property type="entry name" value="Dehydroquinate synthase-like"/>
    <property type="match status" value="1"/>
</dbReference>
<dbReference type="PROSITE" id="PS00913">
    <property type="entry name" value="ADH_IRON_1"/>
    <property type="match status" value="1"/>
</dbReference>
<dbReference type="PROSITE" id="PS00060">
    <property type="entry name" value="ADH_IRON_2"/>
    <property type="match status" value="1"/>
</dbReference>
<gene>
    <name type="primary">eutG</name>
    <name type="synonym">yffV</name>
    <name type="ordered locus">b2453</name>
    <name type="ordered locus">JW2437</name>
</gene>
<sequence length="395" mass="41031">MQNELQTALFQAFDTLNLQRVKTFSVPPVTLCGPGSVSSCGQQAQTRGLKHLFVMADSFLHQAGMTAGLTRSLTVKGIAMTLWPCPVGEPCITDVCAAVAQLRESGCDGVIAFGGGSVLDAAKAVTLLVTNPDSTLAEMSETSVLQPRLPLIAIPTTAGTGSETTNVTVIIDAVSGRKQVLAHASLMPDVAILDAALTEGVPSHVTAMTGIDALTHAIEAYSALNATPFTDSLAIGAIAMIGKSLPKAVGYGHDLAARESMLLASCMAGMAFSSAGLGLCHAMAHQPGAALHIPHGLANAMLLPTVMEFNRMVCRERFSQIGRALRTKKSDDRDAINAVSELIAEVGIGKRLGDVGATSAHYGAWAQAALEDICLRSNPRTASLEQIVGLYAAAQ</sequence>
<keyword id="KW-1283">Bacterial microcompartment</keyword>
<keyword id="KW-0408">Iron</keyword>
<keyword id="KW-0479">Metal-binding</keyword>
<keyword id="KW-0520">NAD</keyword>
<keyword id="KW-0560">Oxidoreductase</keyword>
<keyword id="KW-1185">Reference proteome</keyword>
<protein>
    <recommendedName>
        <fullName evidence="4">Probable alcohol dehydrogenase EutG</fullName>
        <ecNumber evidence="6">1.1.1.1</ecNumber>
    </recommendedName>
    <alternativeName>
        <fullName>Ethanolamine utilization protein EutG</fullName>
    </alternativeName>
</protein>
<organism>
    <name type="scientific">Escherichia coli (strain K12)</name>
    <dbReference type="NCBI Taxonomy" id="83333"/>
    <lineage>
        <taxon>Bacteria</taxon>
        <taxon>Pseudomonadati</taxon>
        <taxon>Pseudomonadota</taxon>
        <taxon>Gammaproteobacteria</taxon>
        <taxon>Enterobacterales</taxon>
        <taxon>Enterobacteriaceae</taxon>
        <taxon>Escherichia</taxon>
    </lineage>
</organism>